<keyword id="KW-0131">Cell cycle</keyword>
<keyword id="KW-0132">Cell division</keyword>
<keyword id="KW-0997">Cell inner membrane</keyword>
<keyword id="KW-1003">Cell membrane</keyword>
<keyword id="KW-0133">Cell shape</keyword>
<keyword id="KW-0961">Cell wall biogenesis/degradation</keyword>
<keyword id="KW-0460">Magnesium</keyword>
<keyword id="KW-0472">Membrane</keyword>
<keyword id="KW-0479">Metal-binding</keyword>
<keyword id="KW-0573">Peptidoglycan synthesis</keyword>
<keyword id="KW-0808">Transferase</keyword>
<keyword id="KW-0812">Transmembrane</keyword>
<keyword id="KW-1133">Transmembrane helix</keyword>
<gene>
    <name evidence="1" type="primary">mraY</name>
    <name type="ordered locus">PputGB1_4515</name>
</gene>
<comment type="function">
    <text evidence="1">Catalyzes the initial step of the lipid cycle reactions in the biosynthesis of the cell wall peptidoglycan: transfers peptidoglycan precursor phospho-MurNAc-pentapeptide from UDP-MurNAc-pentapeptide onto the lipid carrier undecaprenyl phosphate, yielding undecaprenyl-pyrophosphoryl-MurNAc-pentapeptide, known as lipid I.</text>
</comment>
<comment type="catalytic activity">
    <reaction evidence="1">
        <text>UDP-N-acetyl-alpha-D-muramoyl-L-alanyl-gamma-D-glutamyl-meso-2,6-diaminopimeloyl-D-alanyl-D-alanine + di-trans,octa-cis-undecaprenyl phosphate = di-trans,octa-cis-undecaprenyl diphospho-N-acetyl-alpha-D-muramoyl-L-alanyl-D-glutamyl-meso-2,6-diaminopimeloyl-D-alanyl-D-alanine + UMP</text>
        <dbReference type="Rhea" id="RHEA:28386"/>
        <dbReference type="ChEBI" id="CHEBI:57865"/>
        <dbReference type="ChEBI" id="CHEBI:60392"/>
        <dbReference type="ChEBI" id="CHEBI:61386"/>
        <dbReference type="ChEBI" id="CHEBI:61387"/>
        <dbReference type="EC" id="2.7.8.13"/>
    </reaction>
</comment>
<comment type="cofactor">
    <cofactor evidence="1">
        <name>Mg(2+)</name>
        <dbReference type="ChEBI" id="CHEBI:18420"/>
    </cofactor>
</comment>
<comment type="pathway">
    <text evidence="1">Cell wall biogenesis; peptidoglycan biosynthesis.</text>
</comment>
<comment type="subcellular location">
    <subcellularLocation>
        <location evidence="1">Cell inner membrane</location>
        <topology evidence="1">Multi-pass membrane protein</topology>
    </subcellularLocation>
</comment>
<comment type="similarity">
    <text evidence="1">Belongs to the glycosyltransferase 4 family. MraY subfamily.</text>
</comment>
<name>MRAY_PSEPG</name>
<evidence type="ECO:0000255" key="1">
    <source>
        <dbReference type="HAMAP-Rule" id="MF_00038"/>
    </source>
</evidence>
<proteinExistence type="inferred from homology"/>
<feature type="chain" id="PRO_1000074553" description="Phospho-N-acetylmuramoyl-pentapeptide-transferase">
    <location>
        <begin position="1"/>
        <end position="360"/>
    </location>
</feature>
<feature type="transmembrane region" description="Helical" evidence="1">
    <location>
        <begin position="25"/>
        <end position="45"/>
    </location>
</feature>
<feature type="transmembrane region" description="Helical" evidence="1">
    <location>
        <begin position="73"/>
        <end position="93"/>
    </location>
</feature>
<feature type="transmembrane region" description="Helical" evidence="1">
    <location>
        <begin position="97"/>
        <end position="117"/>
    </location>
</feature>
<feature type="transmembrane region" description="Helical" evidence="1">
    <location>
        <begin position="134"/>
        <end position="154"/>
    </location>
</feature>
<feature type="transmembrane region" description="Helical" evidence="1">
    <location>
        <begin position="168"/>
        <end position="188"/>
    </location>
</feature>
<feature type="transmembrane region" description="Helical" evidence="1">
    <location>
        <begin position="199"/>
        <end position="219"/>
    </location>
</feature>
<feature type="transmembrane region" description="Helical" evidence="1">
    <location>
        <begin position="236"/>
        <end position="256"/>
    </location>
</feature>
<feature type="transmembrane region" description="Helical" evidence="1">
    <location>
        <begin position="263"/>
        <end position="283"/>
    </location>
</feature>
<feature type="transmembrane region" description="Helical" evidence="1">
    <location>
        <begin position="288"/>
        <end position="308"/>
    </location>
</feature>
<feature type="transmembrane region" description="Helical" evidence="1">
    <location>
        <begin position="338"/>
        <end position="358"/>
    </location>
</feature>
<accession>B0KFS9</accession>
<organism>
    <name type="scientific">Pseudomonas putida (strain GB-1)</name>
    <dbReference type="NCBI Taxonomy" id="76869"/>
    <lineage>
        <taxon>Bacteria</taxon>
        <taxon>Pseudomonadati</taxon>
        <taxon>Pseudomonadota</taxon>
        <taxon>Gammaproteobacteria</taxon>
        <taxon>Pseudomonadales</taxon>
        <taxon>Pseudomonadaceae</taxon>
        <taxon>Pseudomonas</taxon>
    </lineage>
</organism>
<sequence>MLLLLAEYLQQFHKGFAVFQYLSLRGILGVLTALSLALWLGPWMIRTLQIRQIGQAVRNDGPQSHLSKSGTPTMGGALILSAIAVSTLLWADLSNRYVWVVLIVTLAFGAIGWVDDYRKVIEKNSRGLPSRWKYFWQSVFGLAAAVFLYKTAPTSVETTLILPFIKDVTIPLGVGFVVLTYFVIVGSSNAVNLTDGLDGLAIMPTVMVGGALGIFCYLSGNVKFAEYLLIPYVPGSGELIVFCGALIGAGLGFLWFNTYPAQVFMGDVGALALGAALGTIAVIVRQEIVLFIMGGIFVVETLSVVIQVASFKLTGKRVFRMAPIHHHFELKGWPEPRVIVRFWIITVILVLIGLATLKLR</sequence>
<reference key="1">
    <citation type="submission" date="2008-01" db="EMBL/GenBank/DDBJ databases">
        <title>Complete sequence of Pseudomonas putida GB-1.</title>
        <authorList>
            <consortium name="US DOE Joint Genome Institute"/>
            <person name="Copeland A."/>
            <person name="Lucas S."/>
            <person name="Lapidus A."/>
            <person name="Barry K."/>
            <person name="Glavina del Rio T."/>
            <person name="Dalin E."/>
            <person name="Tice H."/>
            <person name="Pitluck S."/>
            <person name="Bruce D."/>
            <person name="Goodwin L."/>
            <person name="Chertkov O."/>
            <person name="Brettin T."/>
            <person name="Detter J.C."/>
            <person name="Han C."/>
            <person name="Kuske C.R."/>
            <person name="Schmutz J."/>
            <person name="Larimer F."/>
            <person name="Land M."/>
            <person name="Hauser L."/>
            <person name="Kyrpides N."/>
            <person name="Kim E."/>
            <person name="McCarthy J.K."/>
            <person name="Richardson P."/>
        </authorList>
    </citation>
    <scope>NUCLEOTIDE SEQUENCE [LARGE SCALE GENOMIC DNA]</scope>
    <source>
        <strain>GB-1</strain>
    </source>
</reference>
<dbReference type="EC" id="2.7.8.13" evidence="1"/>
<dbReference type="EMBL" id="CP000926">
    <property type="protein sequence ID" value="ABZ00402.1"/>
    <property type="molecule type" value="Genomic_DNA"/>
</dbReference>
<dbReference type="RefSeq" id="WP_003251852.1">
    <property type="nucleotide sequence ID" value="NC_010322.1"/>
</dbReference>
<dbReference type="SMR" id="B0KFS9"/>
<dbReference type="GeneID" id="83682232"/>
<dbReference type="KEGG" id="ppg:PputGB1_4515"/>
<dbReference type="eggNOG" id="COG0472">
    <property type="taxonomic scope" value="Bacteria"/>
</dbReference>
<dbReference type="HOGENOM" id="CLU_023982_0_0_6"/>
<dbReference type="UniPathway" id="UPA00219"/>
<dbReference type="Proteomes" id="UP000002157">
    <property type="component" value="Chromosome"/>
</dbReference>
<dbReference type="GO" id="GO:0005886">
    <property type="term" value="C:plasma membrane"/>
    <property type="evidence" value="ECO:0007669"/>
    <property type="project" value="UniProtKB-SubCell"/>
</dbReference>
<dbReference type="GO" id="GO:0046872">
    <property type="term" value="F:metal ion binding"/>
    <property type="evidence" value="ECO:0007669"/>
    <property type="project" value="UniProtKB-KW"/>
</dbReference>
<dbReference type="GO" id="GO:0008963">
    <property type="term" value="F:phospho-N-acetylmuramoyl-pentapeptide-transferase activity"/>
    <property type="evidence" value="ECO:0007669"/>
    <property type="project" value="UniProtKB-UniRule"/>
</dbReference>
<dbReference type="GO" id="GO:0051992">
    <property type="term" value="F:UDP-N-acetylmuramoyl-L-alanyl-D-glutamyl-meso-2,6-diaminopimelyl-D-alanyl-D-alanine:undecaprenyl-phosphate transferase activity"/>
    <property type="evidence" value="ECO:0007669"/>
    <property type="project" value="RHEA"/>
</dbReference>
<dbReference type="GO" id="GO:0051301">
    <property type="term" value="P:cell division"/>
    <property type="evidence" value="ECO:0007669"/>
    <property type="project" value="UniProtKB-KW"/>
</dbReference>
<dbReference type="GO" id="GO:0071555">
    <property type="term" value="P:cell wall organization"/>
    <property type="evidence" value="ECO:0007669"/>
    <property type="project" value="UniProtKB-KW"/>
</dbReference>
<dbReference type="GO" id="GO:0009252">
    <property type="term" value="P:peptidoglycan biosynthetic process"/>
    <property type="evidence" value="ECO:0007669"/>
    <property type="project" value="UniProtKB-UniRule"/>
</dbReference>
<dbReference type="GO" id="GO:0008360">
    <property type="term" value="P:regulation of cell shape"/>
    <property type="evidence" value="ECO:0007669"/>
    <property type="project" value="UniProtKB-KW"/>
</dbReference>
<dbReference type="CDD" id="cd06852">
    <property type="entry name" value="GT_MraY"/>
    <property type="match status" value="1"/>
</dbReference>
<dbReference type="HAMAP" id="MF_00038">
    <property type="entry name" value="MraY"/>
    <property type="match status" value="1"/>
</dbReference>
<dbReference type="InterPro" id="IPR000715">
    <property type="entry name" value="Glycosyl_transferase_4"/>
</dbReference>
<dbReference type="InterPro" id="IPR003524">
    <property type="entry name" value="PNAcMuramoyl-5peptid_Trfase"/>
</dbReference>
<dbReference type="InterPro" id="IPR018480">
    <property type="entry name" value="PNAcMuramoyl-5peptid_Trfase_CS"/>
</dbReference>
<dbReference type="NCBIfam" id="TIGR00445">
    <property type="entry name" value="mraY"/>
    <property type="match status" value="1"/>
</dbReference>
<dbReference type="PANTHER" id="PTHR22926">
    <property type="entry name" value="PHOSPHO-N-ACETYLMURAMOYL-PENTAPEPTIDE-TRANSFERASE"/>
    <property type="match status" value="1"/>
</dbReference>
<dbReference type="PANTHER" id="PTHR22926:SF5">
    <property type="entry name" value="PHOSPHO-N-ACETYLMURAMOYL-PENTAPEPTIDE-TRANSFERASE HOMOLOG"/>
    <property type="match status" value="1"/>
</dbReference>
<dbReference type="Pfam" id="PF00953">
    <property type="entry name" value="Glycos_transf_4"/>
    <property type="match status" value="1"/>
</dbReference>
<dbReference type="Pfam" id="PF10555">
    <property type="entry name" value="MraY_sig1"/>
    <property type="match status" value="1"/>
</dbReference>
<dbReference type="PROSITE" id="PS01347">
    <property type="entry name" value="MRAY_1"/>
    <property type="match status" value="1"/>
</dbReference>
<dbReference type="PROSITE" id="PS01348">
    <property type="entry name" value="MRAY_2"/>
    <property type="match status" value="1"/>
</dbReference>
<protein>
    <recommendedName>
        <fullName evidence="1">Phospho-N-acetylmuramoyl-pentapeptide-transferase</fullName>
        <ecNumber evidence="1">2.7.8.13</ecNumber>
    </recommendedName>
    <alternativeName>
        <fullName evidence="1">UDP-MurNAc-pentapeptide phosphotransferase</fullName>
    </alternativeName>
</protein>